<dbReference type="EC" id="2.5.1.78" evidence="1"/>
<dbReference type="EMBL" id="CP000730">
    <property type="protein sequence ID" value="ABX29763.1"/>
    <property type="molecule type" value="Genomic_DNA"/>
</dbReference>
<dbReference type="SMR" id="A8Z4J3"/>
<dbReference type="KEGG" id="sax:USA300HOU_1757"/>
<dbReference type="HOGENOM" id="CLU_089358_1_1_9"/>
<dbReference type="UniPathway" id="UPA00275">
    <property type="reaction ID" value="UER00404"/>
</dbReference>
<dbReference type="GO" id="GO:0005829">
    <property type="term" value="C:cytosol"/>
    <property type="evidence" value="ECO:0007669"/>
    <property type="project" value="TreeGrafter"/>
</dbReference>
<dbReference type="GO" id="GO:0009349">
    <property type="term" value="C:riboflavin synthase complex"/>
    <property type="evidence" value="ECO:0007669"/>
    <property type="project" value="InterPro"/>
</dbReference>
<dbReference type="GO" id="GO:0000906">
    <property type="term" value="F:6,7-dimethyl-8-ribityllumazine synthase activity"/>
    <property type="evidence" value="ECO:0007669"/>
    <property type="project" value="UniProtKB-UniRule"/>
</dbReference>
<dbReference type="GO" id="GO:0009231">
    <property type="term" value="P:riboflavin biosynthetic process"/>
    <property type="evidence" value="ECO:0007669"/>
    <property type="project" value="UniProtKB-UniRule"/>
</dbReference>
<dbReference type="CDD" id="cd09209">
    <property type="entry name" value="Lumazine_synthase-I"/>
    <property type="match status" value="1"/>
</dbReference>
<dbReference type="FunFam" id="3.40.50.960:FF:000001">
    <property type="entry name" value="6,7-dimethyl-8-ribityllumazine synthase"/>
    <property type="match status" value="1"/>
</dbReference>
<dbReference type="Gene3D" id="3.40.50.960">
    <property type="entry name" value="Lumazine/riboflavin synthase"/>
    <property type="match status" value="1"/>
</dbReference>
<dbReference type="HAMAP" id="MF_00178">
    <property type="entry name" value="Lumazine_synth"/>
    <property type="match status" value="1"/>
</dbReference>
<dbReference type="InterPro" id="IPR034964">
    <property type="entry name" value="LS"/>
</dbReference>
<dbReference type="InterPro" id="IPR002180">
    <property type="entry name" value="LS/RS"/>
</dbReference>
<dbReference type="InterPro" id="IPR036467">
    <property type="entry name" value="LS/RS_sf"/>
</dbReference>
<dbReference type="NCBIfam" id="TIGR00114">
    <property type="entry name" value="lumazine-synth"/>
    <property type="match status" value="1"/>
</dbReference>
<dbReference type="NCBIfam" id="NF000812">
    <property type="entry name" value="PRK00061.1-4"/>
    <property type="match status" value="1"/>
</dbReference>
<dbReference type="PANTHER" id="PTHR21058:SF0">
    <property type="entry name" value="6,7-DIMETHYL-8-RIBITYLLUMAZINE SYNTHASE"/>
    <property type="match status" value="1"/>
</dbReference>
<dbReference type="PANTHER" id="PTHR21058">
    <property type="entry name" value="6,7-DIMETHYL-8-RIBITYLLUMAZINE SYNTHASE DMRL SYNTHASE LUMAZINE SYNTHASE"/>
    <property type="match status" value="1"/>
</dbReference>
<dbReference type="Pfam" id="PF00885">
    <property type="entry name" value="DMRL_synthase"/>
    <property type="match status" value="1"/>
</dbReference>
<dbReference type="SUPFAM" id="SSF52121">
    <property type="entry name" value="Lumazine synthase"/>
    <property type="match status" value="1"/>
</dbReference>
<comment type="function">
    <text evidence="1">Catalyzes the formation of 6,7-dimethyl-8-ribityllumazine by condensation of 5-amino-6-(D-ribitylamino)uracil with 3,4-dihydroxy-2-butanone 4-phosphate. This is the penultimate step in the biosynthesis of riboflavin.</text>
</comment>
<comment type="catalytic activity">
    <reaction evidence="1">
        <text>(2S)-2-hydroxy-3-oxobutyl phosphate + 5-amino-6-(D-ribitylamino)uracil = 6,7-dimethyl-8-(1-D-ribityl)lumazine + phosphate + 2 H2O + H(+)</text>
        <dbReference type="Rhea" id="RHEA:26152"/>
        <dbReference type="ChEBI" id="CHEBI:15377"/>
        <dbReference type="ChEBI" id="CHEBI:15378"/>
        <dbReference type="ChEBI" id="CHEBI:15934"/>
        <dbReference type="ChEBI" id="CHEBI:43474"/>
        <dbReference type="ChEBI" id="CHEBI:58201"/>
        <dbReference type="ChEBI" id="CHEBI:58830"/>
        <dbReference type="EC" id="2.5.1.78"/>
    </reaction>
</comment>
<comment type="pathway">
    <text evidence="1">Cofactor biosynthesis; riboflavin biosynthesis; riboflavin from 2-hydroxy-3-oxobutyl phosphate and 5-amino-6-(D-ribitylamino)uracil: step 1/2.</text>
</comment>
<comment type="subunit">
    <text evidence="1">Forms an icosahedral capsid composed of 60 subunits, arranged as a dodecamer of pentamers.</text>
</comment>
<comment type="similarity">
    <text evidence="1">Belongs to the DMRL synthase family.</text>
</comment>
<proteinExistence type="inferred from homology"/>
<organism>
    <name type="scientific">Staphylococcus aureus (strain USA300 / TCH1516)</name>
    <dbReference type="NCBI Taxonomy" id="451516"/>
    <lineage>
        <taxon>Bacteria</taxon>
        <taxon>Bacillati</taxon>
        <taxon>Bacillota</taxon>
        <taxon>Bacilli</taxon>
        <taxon>Bacillales</taxon>
        <taxon>Staphylococcaceae</taxon>
        <taxon>Staphylococcus</taxon>
    </lineage>
</organism>
<feature type="chain" id="PRO_1000077253" description="6,7-dimethyl-8-ribityllumazine synthase">
    <location>
        <begin position="1"/>
        <end position="154"/>
    </location>
</feature>
<feature type="active site" description="Proton donor" evidence="1">
    <location>
        <position position="87"/>
    </location>
</feature>
<feature type="binding site" evidence="1">
    <location>
        <position position="21"/>
    </location>
    <ligand>
        <name>5-amino-6-(D-ribitylamino)uracil</name>
        <dbReference type="ChEBI" id="CHEBI:15934"/>
    </ligand>
</feature>
<feature type="binding site" evidence="1">
    <location>
        <begin position="55"/>
        <end position="57"/>
    </location>
    <ligand>
        <name>5-amino-6-(D-ribitylamino)uracil</name>
        <dbReference type="ChEBI" id="CHEBI:15934"/>
    </ligand>
</feature>
<feature type="binding site" evidence="1">
    <location>
        <begin position="79"/>
        <end position="81"/>
    </location>
    <ligand>
        <name>5-amino-6-(D-ribitylamino)uracil</name>
        <dbReference type="ChEBI" id="CHEBI:15934"/>
    </ligand>
</feature>
<feature type="binding site" evidence="1">
    <location>
        <begin position="84"/>
        <end position="85"/>
    </location>
    <ligand>
        <name>(2S)-2-hydroxy-3-oxobutyl phosphate</name>
        <dbReference type="ChEBI" id="CHEBI:58830"/>
    </ligand>
</feature>
<feature type="binding site" evidence="1">
    <location>
        <position position="112"/>
    </location>
    <ligand>
        <name>5-amino-6-(D-ribitylamino)uracil</name>
        <dbReference type="ChEBI" id="CHEBI:15934"/>
    </ligand>
</feature>
<feature type="binding site" evidence="1">
    <location>
        <position position="126"/>
    </location>
    <ligand>
        <name>(2S)-2-hydroxy-3-oxobutyl phosphate</name>
        <dbReference type="ChEBI" id="CHEBI:58830"/>
    </ligand>
</feature>
<evidence type="ECO:0000255" key="1">
    <source>
        <dbReference type="HAMAP-Rule" id="MF_00178"/>
    </source>
</evidence>
<sequence>MNFEGKLIGKDLKVAIVVSRFNDFITGRLLEGAKDTLIRHDVNEDNIDVAFVPGAFEIPLVAKKLASSGNYDAVITLGCVIRGATSHYDYVCNEVAKGVSKVNDQTNVPVIFGILTTESIEQAVERAGTKAGNKGAEAAVSAIEMANLLKSIKA</sequence>
<reference key="1">
    <citation type="journal article" date="2007" name="BMC Microbiol.">
        <title>Subtle genetic changes enhance virulence of methicillin resistant and sensitive Staphylococcus aureus.</title>
        <authorList>
            <person name="Highlander S.K."/>
            <person name="Hulten K.G."/>
            <person name="Qin X."/>
            <person name="Jiang H."/>
            <person name="Yerrapragada S."/>
            <person name="Mason E.O. Jr."/>
            <person name="Shang Y."/>
            <person name="Williams T.M."/>
            <person name="Fortunov R.M."/>
            <person name="Liu Y."/>
            <person name="Igboeli O."/>
            <person name="Petrosino J."/>
            <person name="Tirumalai M."/>
            <person name="Uzman A."/>
            <person name="Fox G.E."/>
            <person name="Cardenas A.M."/>
            <person name="Muzny D.M."/>
            <person name="Hemphill L."/>
            <person name="Ding Y."/>
            <person name="Dugan S."/>
            <person name="Blyth P.R."/>
            <person name="Buhay C.J."/>
            <person name="Dinh H.H."/>
            <person name="Hawes A.C."/>
            <person name="Holder M."/>
            <person name="Kovar C.L."/>
            <person name="Lee S.L."/>
            <person name="Liu W."/>
            <person name="Nazareth L.V."/>
            <person name="Wang Q."/>
            <person name="Zhou J."/>
            <person name="Kaplan S.L."/>
            <person name="Weinstock G.M."/>
        </authorList>
    </citation>
    <scope>NUCLEOTIDE SEQUENCE [LARGE SCALE GENOMIC DNA]</scope>
    <source>
        <strain>USA300 / TCH1516</strain>
    </source>
</reference>
<keyword id="KW-0686">Riboflavin biosynthesis</keyword>
<keyword id="KW-0808">Transferase</keyword>
<accession>A8Z4J3</accession>
<gene>
    <name evidence="1" type="primary">ribH</name>
    <name type="ordered locus">USA300HOU_1757</name>
</gene>
<name>RISB_STAAT</name>
<protein>
    <recommendedName>
        <fullName evidence="1">6,7-dimethyl-8-ribityllumazine synthase</fullName>
        <shortName evidence="1">DMRL synthase</shortName>
        <shortName evidence="1">LS</shortName>
        <shortName evidence="1">Lumazine synthase</shortName>
        <ecNumber evidence="1">2.5.1.78</ecNumber>
    </recommendedName>
</protein>